<organism>
    <name type="scientific">Burkholderia ambifaria (strain MC40-6)</name>
    <dbReference type="NCBI Taxonomy" id="398577"/>
    <lineage>
        <taxon>Bacteria</taxon>
        <taxon>Pseudomonadati</taxon>
        <taxon>Pseudomonadota</taxon>
        <taxon>Betaproteobacteria</taxon>
        <taxon>Burkholderiales</taxon>
        <taxon>Burkholderiaceae</taxon>
        <taxon>Burkholderia</taxon>
        <taxon>Burkholderia cepacia complex</taxon>
    </lineage>
</organism>
<comment type="function">
    <text evidence="1">Involved in iron-sulfur (Fe-S) cluster assembly. May act as a regulator of Fe-S biogenesis.</text>
</comment>
<comment type="similarity">
    <text evidence="1">Belongs to the frataxin family.</text>
</comment>
<protein>
    <recommendedName>
        <fullName evidence="1">Iron-sulfur cluster assembly protein CyaY</fullName>
    </recommendedName>
</protein>
<sequence length="108" mass="11998">MSDTEYLARAEAVLASVERTVDAANDGDHDIDLERNGSVLTLTFENGSKIIINLQPPMKELWIAAKAGGFHYRFVDGEWRDTRTGTEFFSALTDYATQQAGLPITFRA</sequence>
<gene>
    <name evidence="1" type="primary">cyaY</name>
    <name type="ordered locus">BamMC406_0314</name>
</gene>
<dbReference type="EMBL" id="CP001025">
    <property type="protein sequence ID" value="ACB62815.1"/>
    <property type="molecule type" value="Genomic_DNA"/>
</dbReference>
<dbReference type="RefSeq" id="WP_006758798.1">
    <property type="nucleotide sequence ID" value="NC_010551.1"/>
</dbReference>
<dbReference type="SMR" id="B1YRR7"/>
<dbReference type="GeneID" id="93084280"/>
<dbReference type="KEGG" id="bac:BamMC406_0314"/>
<dbReference type="HOGENOM" id="CLU_080880_3_0_4"/>
<dbReference type="OrthoDB" id="285675at2"/>
<dbReference type="Proteomes" id="UP000001680">
    <property type="component" value="Chromosome 1"/>
</dbReference>
<dbReference type="GO" id="GO:0005829">
    <property type="term" value="C:cytosol"/>
    <property type="evidence" value="ECO:0007669"/>
    <property type="project" value="TreeGrafter"/>
</dbReference>
<dbReference type="GO" id="GO:0008199">
    <property type="term" value="F:ferric iron binding"/>
    <property type="evidence" value="ECO:0007669"/>
    <property type="project" value="InterPro"/>
</dbReference>
<dbReference type="GO" id="GO:0008198">
    <property type="term" value="F:ferrous iron binding"/>
    <property type="evidence" value="ECO:0007669"/>
    <property type="project" value="TreeGrafter"/>
</dbReference>
<dbReference type="GO" id="GO:0016226">
    <property type="term" value="P:iron-sulfur cluster assembly"/>
    <property type="evidence" value="ECO:0007669"/>
    <property type="project" value="UniProtKB-UniRule"/>
</dbReference>
<dbReference type="CDD" id="cd00503">
    <property type="entry name" value="Frataxin"/>
    <property type="match status" value="1"/>
</dbReference>
<dbReference type="Gene3D" id="3.30.920.10">
    <property type="entry name" value="Frataxin/CyaY"/>
    <property type="match status" value="1"/>
</dbReference>
<dbReference type="HAMAP" id="MF_00142">
    <property type="entry name" value="CyaY"/>
    <property type="match status" value="1"/>
</dbReference>
<dbReference type="InterPro" id="IPR047584">
    <property type="entry name" value="CyaY"/>
</dbReference>
<dbReference type="InterPro" id="IPR002908">
    <property type="entry name" value="Frataxin/CyaY"/>
</dbReference>
<dbReference type="InterPro" id="IPR036524">
    <property type="entry name" value="Frataxin/CyaY_sf"/>
</dbReference>
<dbReference type="InterPro" id="IPR020895">
    <property type="entry name" value="Frataxin_CS"/>
</dbReference>
<dbReference type="NCBIfam" id="TIGR03421">
    <property type="entry name" value="FeS_CyaY"/>
    <property type="match status" value="1"/>
</dbReference>
<dbReference type="PANTHER" id="PTHR16821">
    <property type="entry name" value="FRATAXIN"/>
    <property type="match status" value="1"/>
</dbReference>
<dbReference type="PANTHER" id="PTHR16821:SF2">
    <property type="entry name" value="FRATAXIN, MITOCHONDRIAL"/>
    <property type="match status" value="1"/>
</dbReference>
<dbReference type="Pfam" id="PF01491">
    <property type="entry name" value="Frataxin_Cyay"/>
    <property type="match status" value="1"/>
</dbReference>
<dbReference type="SMART" id="SM01219">
    <property type="entry name" value="Frataxin_Cyay"/>
    <property type="match status" value="1"/>
</dbReference>
<dbReference type="SUPFAM" id="SSF55387">
    <property type="entry name" value="Frataxin/Nqo15-like"/>
    <property type="match status" value="1"/>
</dbReference>
<dbReference type="PROSITE" id="PS01344">
    <property type="entry name" value="FRATAXIN_1"/>
    <property type="match status" value="1"/>
</dbReference>
<dbReference type="PROSITE" id="PS50810">
    <property type="entry name" value="FRATAXIN_2"/>
    <property type="match status" value="1"/>
</dbReference>
<proteinExistence type="inferred from homology"/>
<evidence type="ECO:0000255" key="1">
    <source>
        <dbReference type="HAMAP-Rule" id="MF_00142"/>
    </source>
</evidence>
<keyword id="KW-0408">Iron</keyword>
<keyword id="KW-0479">Metal-binding</keyword>
<feature type="chain" id="PRO_1000096235" description="Iron-sulfur cluster assembly protein CyaY">
    <location>
        <begin position="1"/>
        <end position="108"/>
    </location>
</feature>
<reference key="1">
    <citation type="submission" date="2008-04" db="EMBL/GenBank/DDBJ databases">
        <title>Complete sequence of chromosome 1 of Burkholderia ambifaria MC40-6.</title>
        <authorList>
            <person name="Copeland A."/>
            <person name="Lucas S."/>
            <person name="Lapidus A."/>
            <person name="Glavina del Rio T."/>
            <person name="Dalin E."/>
            <person name="Tice H."/>
            <person name="Pitluck S."/>
            <person name="Chain P."/>
            <person name="Malfatti S."/>
            <person name="Shin M."/>
            <person name="Vergez L."/>
            <person name="Lang D."/>
            <person name="Schmutz J."/>
            <person name="Larimer F."/>
            <person name="Land M."/>
            <person name="Hauser L."/>
            <person name="Kyrpides N."/>
            <person name="Lykidis A."/>
            <person name="Ramette A."/>
            <person name="Konstantinidis K."/>
            <person name="Tiedje J."/>
            <person name="Richardson P."/>
        </authorList>
    </citation>
    <scope>NUCLEOTIDE SEQUENCE [LARGE SCALE GENOMIC DNA]</scope>
    <source>
        <strain>MC40-6</strain>
    </source>
</reference>
<name>CYAY_BURA4</name>
<accession>B1YRR7</accession>